<evidence type="ECO:0000255" key="1">
    <source>
        <dbReference type="HAMAP-Rule" id="MF_01599"/>
    </source>
</evidence>
<comment type="function">
    <text evidence="1">Na(+)/H(+) antiporter that extrudes sodium in exchange for external protons.</text>
</comment>
<comment type="catalytic activity">
    <reaction evidence="1">
        <text>2 Na(+)(in) + 3 H(+)(out) = 2 Na(+)(out) + 3 H(+)(in)</text>
        <dbReference type="Rhea" id="RHEA:29247"/>
        <dbReference type="ChEBI" id="CHEBI:15378"/>
        <dbReference type="ChEBI" id="CHEBI:29101"/>
    </reaction>
    <physiologicalReaction direction="left-to-right" evidence="1">
        <dbReference type="Rhea" id="RHEA:29248"/>
    </physiologicalReaction>
</comment>
<comment type="subcellular location">
    <subcellularLocation>
        <location evidence="1">Cell inner membrane</location>
        <topology evidence="1">Multi-pass membrane protein</topology>
    </subcellularLocation>
</comment>
<comment type="similarity">
    <text evidence="1">Belongs to the NhaB Na(+)/H(+) (TC 2.A.34) antiporter family.</text>
</comment>
<proteinExistence type="inferred from homology"/>
<sequence>MEISWGRALWRNFLGQSPDWYKLALIIFLIVNPLIFLISPFVAGWLLVAEFIFTLAMALKCYPLLPGGLLAIEAVFIGMTSAEHVREEVAANLEVLLLLMFMVAGIYFMKQLLLFIFTRLLLSIRSKMLLSLSFCVAAAFLSAFLDALTVVAVVISVAVGFYGIYHRVASSRTEDTDLQDDSHIDKHYKVVLEQFRGFLRSLMMHAGVGTALGGVMTMVGEPQNLIIAKAAGWHFGDFFLRMSPVTVPVLICGLLTCLLVEKLRWFGYGETLPEKVREVLQQFDDQSRHQRTRQDKIRLIVQAIIGVWLVTALALHLAEVGLIGLSVIILATSLTGVTDEHAIGKAFTESLPFTALLTVFFSVVAVIIDQQLFSPIIQFVLQASEHAQLSLFYIFNGLLSSISDNVFVGTIYINEAKAAMESGAITLKQYELLAVAINTGTNLPSVATPNGQAAFLFLLTSALAPLIRLSYGRMVWMALPYTLVLTLVGLLCVEFTLAPVTEWFMQMGWIATL</sequence>
<reference key="1">
    <citation type="journal article" date="2009" name="PLoS Genet.">
        <title>Organised genome dynamics in the Escherichia coli species results in highly diverse adaptive paths.</title>
        <authorList>
            <person name="Touchon M."/>
            <person name="Hoede C."/>
            <person name="Tenaillon O."/>
            <person name="Barbe V."/>
            <person name="Baeriswyl S."/>
            <person name="Bidet P."/>
            <person name="Bingen E."/>
            <person name="Bonacorsi S."/>
            <person name="Bouchier C."/>
            <person name="Bouvet O."/>
            <person name="Calteau A."/>
            <person name="Chiapello H."/>
            <person name="Clermont O."/>
            <person name="Cruveiller S."/>
            <person name="Danchin A."/>
            <person name="Diard M."/>
            <person name="Dossat C."/>
            <person name="Karoui M.E."/>
            <person name="Frapy E."/>
            <person name="Garry L."/>
            <person name="Ghigo J.M."/>
            <person name="Gilles A.M."/>
            <person name="Johnson J."/>
            <person name="Le Bouguenec C."/>
            <person name="Lescat M."/>
            <person name="Mangenot S."/>
            <person name="Martinez-Jehanne V."/>
            <person name="Matic I."/>
            <person name="Nassif X."/>
            <person name="Oztas S."/>
            <person name="Petit M.A."/>
            <person name="Pichon C."/>
            <person name="Rouy Z."/>
            <person name="Ruf C.S."/>
            <person name="Schneider D."/>
            <person name="Tourret J."/>
            <person name="Vacherie B."/>
            <person name="Vallenet D."/>
            <person name="Medigue C."/>
            <person name="Rocha E.P.C."/>
            <person name="Denamur E."/>
        </authorList>
    </citation>
    <scope>NUCLEOTIDE SEQUENCE [LARGE SCALE GENOMIC DNA]</scope>
    <source>
        <strain>UMN026 / ExPEC</strain>
    </source>
</reference>
<feature type="chain" id="PRO_1000148037" description="Na(+)/H(+) antiporter NhaB">
    <location>
        <begin position="1"/>
        <end position="513"/>
    </location>
</feature>
<feature type="transmembrane region" description="Helical" evidence="1">
    <location>
        <begin position="23"/>
        <end position="43"/>
    </location>
</feature>
<feature type="transmembrane region" description="Helical" evidence="1">
    <location>
        <begin position="52"/>
        <end position="72"/>
    </location>
</feature>
<feature type="transmembrane region" description="Helical" evidence="1">
    <location>
        <begin position="97"/>
        <end position="117"/>
    </location>
</feature>
<feature type="transmembrane region" description="Helical" evidence="1">
    <location>
        <begin position="120"/>
        <end position="140"/>
    </location>
</feature>
<feature type="transmembrane region" description="Helical" evidence="1">
    <location>
        <begin position="144"/>
        <end position="164"/>
    </location>
</feature>
<feature type="transmembrane region" description="Helical" evidence="1">
    <location>
        <begin position="202"/>
        <end position="222"/>
    </location>
</feature>
<feature type="transmembrane region" description="Helical" evidence="1">
    <location>
        <begin position="238"/>
        <end position="258"/>
    </location>
</feature>
<feature type="transmembrane region" description="Helical" evidence="1">
    <location>
        <begin position="303"/>
        <end position="323"/>
    </location>
</feature>
<feature type="transmembrane region" description="Helical" evidence="1">
    <location>
        <begin position="348"/>
        <end position="368"/>
    </location>
</feature>
<feature type="transmembrane region" description="Helical" evidence="1">
    <location>
        <begin position="391"/>
        <end position="411"/>
    </location>
</feature>
<feature type="transmembrane region" description="Helical" evidence="1">
    <location>
        <begin position="447"/>
        <end position="467"/>
    </location>
</feature>
<feature type="transmembrane region" description="Helical" evidence="1">
    <location>
        <begin position="475"/>
        <end position="495"/>
    </location>
</feature>
<organism>
    <name type="scientific">Escherichia coli O17:K52:H18 (strain UMN026 / ExPEC)</name>
    <dbReference type="NCBI Taxonomy" id="585056"/>
    <lineage>
        <taxon>Bacteria</taxon>
        <taxon>Pseudomonadati</taxon>
        <taxon>Pseudomonadota</taxon>
        <taxon>Gammaproteobacteria</taxon>
        <taxon>Enterobacterales</taxon>
        <taxon>Enterobacteriaceae</taxon>
        <taxon>Escherichia</taxon>
    </lineage>
</organism>
<gene>
    <name evidence="1" type="primary">nhaB</name>
    <name type="ordered locus">ECUMN_1475</name>
</gene>
<dbReference type="EMBL" id="CU928163">
    <property type="protein sequence ID" value="CAR12683.1"/>
    <property type="molecule type" value="Genomic_DNA"/>
</dbReference>
<dbReference type="RefSeq" id="WP_000406391.1">
    <property type="nucleotide sequence ID" value="NC_011751.1"/>
</dbReference>
<dbReference type="RefSeq" id="YP_002412220.1">
    <property type="nucleotide sequence ID" value="NC_011751.1"/>
</dbReference>
<dbReference type="SMR" id="B7N3Z0"/>
<dbReference type="STRING" id="585056.ECUMN_1475"/>
<dbReference type="GeneID" id="75203299"/>
<dbReference type="KEGG" id="eum:ECUMN_1475"/>
<dbReference type="PATRIC" id="fig|585056.7.peg.1671"/>
<dbReference type="HOGENOM" id="CLU_041110_0_0_6"/>
<dbReference type="Proteomes" id="UP000007097">
    <property type="component" value="Chromosome"/>
</dbReference>
<dbReference type="GO" id="GO:0005886">
    <property type="term" value="C:plasma membrane"/>
    <property type="evidence" value="ECO:0007669"/>
    <property type="project" value="UniProtKB-SubCell"/>
</dbReference>
<dbReference type="GO" id="GO:0015385">
    <property type="term" value="F:sodium:proton antiporter activity"/>
    <property type="evidence" value="ECO:0007669"/>
    <property type="project" value="InterPro"/>
</dbReference>
<dbReference type="HAMAP" id="MF_01599">
    <property type="entry name" value="NhaB"/>
    <property type="match status" value="1"/>
</dbReference>
<dbReference type="InterPro" id="IPR004671">
    <property type="entry name" value="Na+/H+_antiporter_NhaB"/>
</dbReference>
<dbReference type="NCBIfam" id="TIGR00774">
    <property type="entry name" value="NhaB"/>
    <property type="match status" value="1"/>
</dbReference>
<dbReference type="NCBIfam" id="NF007093">
    <property type="entry name" value="PRK09547.1"/>
    <property type="match status" value="1"/>
</dbReference>
<dbReference type="PANTHER" id="PTHR43302:SF1">
    <property type="entry name" value="NA(+)_H(+) ANTIPORTER NHAB"/>
    <property type="match status" value="1"/>
</dbReference>
<dbReference type="PANTHER" id="PTHR43302">
    <property type="entry name" value="TRANSPORTER ARSB-RELATED"/>
    <property type="match status" value="1"/>
</dbReference>
<dbReference type="Pfam" id="PF06450">
    <property type="entry name" value="NhaB"/>
    <property type="match status" value="1"/>
</dbReference>
<name>NHAB_ECOLU</name>
<keyword id="KW-0050">Antiport</keyword>
<keyword id="KW-0997">Cell inner membrane</keyword>
<keyword id="KW-1003">Cell membrane</keyword>
<keyword id="KW-0406">Ion transport</keyword>
<keyword id="KW-0472">Membrane</keyword>
<keyword id="KW-0915">Sodium</keyword>
<keyword id="KW-0739">Sodium transport</keyword>
<keyword id="KW-0812">Transmembrane</keyword>
<keyword id="KW-1133">Transmembrane helix</keyword>
<keyword id="KW-0813">Transport</keyword>
<accession>B7N3Z0</accession>
<protein>
    <recommendedName>
        <fullName evidence="1">Na(+)/H(+) antiporter NhaB</fullName>
    </recommendedName>
    <alternativeName>
        <fullName evidence="1">Sodium/proton antiporter NhaB</fullName>
    </alternativeName>
</protein>